<gene>
    <name evidence="1" type="primary">trhO</name>
    <name type="ordered locus">PputW619_1365</name>
</gene>
<dbReference type="EC" id="1.14.-.-" evidence="1"/>
<dbReference type="EMBL" id="CP000949">
    <property type="protein sequence ID" value="ACA71870.1"/>
    <property type="molecule type" value="Genomic_DNA"/>
</dbReference>
<dbReference type="SMR" id="B1J5F7"/>
<dbReference type="STRING" id="390235.PputW619_1365"/>
<dbReference type="KEGG" id="ppw:PputW619_1365"/>
<dbReference type="eggNOG" id="COG1054">
    <property type="taxonomic scope" value="Bacteria"/>
</dbReference>
<dbReference type="HOGENOM" id="CLU_038878_0_0_6"/>
<dbReference type="OrthoDB" id="9778326at2"/>
<dbReference type="GO" id="GO:0016705">
    <property type="term" value="F:oxidoreductase activity, acting on paired donors, with incorporation or reduction of molecular oxygen"/>
    <property type="evidence" value="ECO:0007669"/>
    <property type="project" value="UniProtKB-UniRule"/>
</dbReference>
<dbReference type="GO" id="GO:0006400">
    <property type="term" value="P:tRNA modification"/>
    <property type="evidence" value="ECO:0007669"/>
    <property type="project" value="UniProtKB-UniRule"/>
</dbReference>
<dbReference type="CDD" id="cd01518">
    <property type="entry name" value="RHOD_YceA"/>
    <property type="match status" value="1"/>
</dbReference>
<dbReference type="Gene3D" id="3.30.70.100">
    <property type="match status" value="1"/>
</dbReference>
<dbReference type="Gene3D" id="3.40.250.10">
    <property type="entry name" value="Rhodanese-like domain"/>
    <property type="match status" value="1"/>
</dbReference>
<dbReference type="HAMAP" id="MF_00469">
    <property type="entry name" value="TrhO"/>
    <property type="match status" value="1"/>
</dbReference>
<dbReference type="InterPro" id="IPR001763">
    <property type="entry name" value="Rhodanese-like_dom"/>
</dbReference>
<dbReference type="InterPro" id="IPR036873">
    <property type="entry name" value="Rhodanese-like_dom_sf"/>
</dbReference>
<dbReference type="InterPro" id="IPR020936">
    <property type="entry name" value="TrhO"/>
</dbReference>
<dbReference type="InterPro" id="IPR040503">
    <property type="entry name" value="TRHO_N"/>
</dbReference>
<dbReference type="NCBIfam" id="NF001136">
    <property type="entry name" value="PRK00142.1-4"/>
    <property type="match status" value="1"/>
</dbReference>
<dbReference type="PANTHER" id="PTHR43268:SF3">
    <property type="entry name" value="RHODANESE-LIKE DOMAIN-CONTAINING PROTEIN 7-RELATED"/>
    <property type="match status" value="1"/>
</dbReference>
<dbReference type="PANTHER" id="PTHR43268">
    <property type="entry name" value="THIOSULFATE SULFURTRANSFERASE/RHODANESE-LIKE DOMAIN-CONTAINING PROTEIN 2"/>
    <property type="match status" value="1"/>
</dbReference>
<dbReference type="Pfam" id="PF00581">
    <property type="entry name" value="Rhodanese"/>
    <property type="match status" value="1"/>
</dbReference>
<dbReference type="Pfam" id="PF17773">
    <property type="entry name" value="UPF0176_N"/>
    <property type="match status" value="1"/>
</dbReference>
<dbReference type="SMART" id="SM00450">
    <property type="entry name" value="RHOD"/>
    <property type="match status" value="1"/>
</dbReference>
<dbReference type="SUPFAM" id="SSF52821">
    <property type="entry name" value="Rhodanese/Cell cycle control phosphatase"/>
    <property type="match status" value="1"/>
</dbReference>
<dbReference type="PROSITE" id="PS50206">
    <property type="entry name" value="RHODANESE_3"/>
    <property type="match status" value="1"/>
</dbReference>
<accession>B1J5F7</accession>
<keyword id="KW-0560">Oxidoreductase</keyword>
<keyword id="KW-0819">tRNA processing</keyword>
<feature type="chain" id="PRO_1000200367" description="tRNA uridine(34) hydroxylase">
    <location>
        <begin position="1"/>
        <end position="310"/>
    </location>
</feature>
<feature type="domain" description="Rhodanese" evidence="1">
    <location>
        <begin position="124"/>
        <end position="218"/>
    </location>
</feature>
<feature type="active site" description="Cysteine persulfide intermediate" evidence="1">
    <location>
        <position position="178"/>
    </location>
</feature>
<organism>
    <name type="scientific">Pseudomonas putida (strain W619)</name>
    <dbReference type="NCBI Taxonomy" id="390235"/>
    <lineage>
        <taxon>Bacteria</taxon>
        <taxon>Pseudomonadati</taxon>
        <taxon>Pseudomonadota</taxon>
        <taxon>Gammaproteobacteria</taxon>
        <taxon>Pseudomonadales</taxon>
        <taxon>Pseudomonadaceae</taxon>
        <taxon>Pseudomonas</taxon>
    </lineage>
</organism>
<reference key="1">
    <citation type="submission" date="2008-02" db="EMBL/GenBank/DDBJ databases">
        <title>Complete sequence of Pseudomonas putida W619.</title>
        <authorList>
            <person name="Copeland A."/>
            <person name="Lucas S."/>
            <person name="Lapidus A."/>
            <person name="Barry K."/>
            <person name="Detter J.C."/>
            <person name="Glavina del Rio T."/>
            <person name="Dalin E."/>
            <person name="Tice H."/>
            <person name="Pitluck S."/>
            <person name="Chain P."/>
            <person name="Malfatti S."/>
            <person name="Shin M."/>
            <person name="Vergez L."/>
            <person name="Schmutz J."/>
            <person name="Larimer F."/>
            <person name="Land M."/>
            <person name="Hauser L."/>
            <person name="Kyrpides N."/>
            <person name="Kim E."/>
            <person name="Taghavi S."/>
            <person name="Vangronsveld D."/>
            <person name="van der Lelie D."/>
            <person name="Richardson P."/>
        </authorList>
    </citation>
    <scope>NUCLEOTIDE SEQUENCE [LARGE SCALE GENOMIC DNA]</scope>
    <source>
        <strain>W619</strain>
    </source>
</reference>
<name>TRHO_PSEPW</name>
<comment type="function">
    <text evidence="1">Catalyzes oxygen-dependent 5-hydroxyuridine (ho5U) modification at position 34 in tRNAs.</text>
</comment>
<comment type="catalytic activity">
    <reaction evidence="1">
        <text>uridine(34) in tRNA + AH2 + O2 = 5-hydroxyuridine(34) in tRNA + A + H2O</text>
        <dbReference type="Rhea" id="RHEA:64224"/>
        <dbReference type="Rhea" id="RHEA-COMP:11727"/>
        <dbReference type="Rhea" id="RHEA-COMP:13381"/>
        <dbReference type="ChEBI" id="CHEBI:13193"/>
        <dbReference type="ChEBI" id="CHEBI:15377"/>
        <dbReference type="ChEBI" id="CHEBI:15379"/>
        <dbReference type="ChEBI" id="CHEBI:17499"/>
        <dbReference type="ChEBI" id="CHEBI:65315"/>
        <dbReference type="ChEBI" id="CHEBI:136877"/>
    </reaction>
</comment>
<comment type="similarity">
    <text evidence="1">Belongs to the TrhO family.</text>
</comment>
<sequence>MTQPIVVAALYKFVTLEDYAELREPLLKAMLDNGVKGTLLLANEGINGTVSATREGIDGLLTWLRSDPRLVDVDHKESYCDEQPFYRTKVKLKKEIVTLGVPGVDPNNAVGTYVEPKDWNALISDPEVLLIDTRNDYEVAIGTFKGAIDPKTETFREFPEYIKANFDPSKHKKVAMFCTGGIRCEKASSYMLGEGFEAVYHLKGGILKYFEEVPQEESLWDGDCFVFDNRVTVRHDLTEGEYDQCHACRHPVNAQDRASEHYSPGVSCPHCWDSLSEKTRRSAIDRQKQIELAKARNLPHPIGYNYKAEA</sequence>
<evidence type="ECO:0000255" key="1">
    <source>
        <dbReference type="HAMAP-Rule" id="MF_00469"/>
    </source>
</evidence>
<proteinExistence type="inferred from homology"/>
<protein>
    <recommendedName>
        <fullName evidence="1">tRNA uridine(34) hydroxylase</fullName>
        <ecNumber evidence="1">1.14.-.-</ecNumber>
    </recommendedName>
    <alternativeName>
        <fullName evidence="1">tRNA hydroxylation protein O</fullName>
    </alternativeName>
</protein>